<evidence type="ECO:0000250" key="1">
    <source>
        <dbReference type="UniProtKB" id="Q9VDM6"/>
    </source>
</evidence>
<evidence type="ECO:0000255" key="2">
    <source>
        <dbReference type="HAMAP-Rule" id="MF_03006"/>
    </source>
</evidence>
<evidence type="ECO:0000256" key="3">
    <source>
        <dbReference type="SAM" id="MobiDB-lite"/>
    </source>
</evidence>
<name>EI3G2_DROYA</name>
<comment type="function">
    <text evidence="2">RNA-binding component of the eukaryotic translation initiation factor 3 (eIF-3) complex, which is involved in protein synthesis of a specialized repertoire of mRNAs and, together with other initiation factors, stimulates binding of mRNA and methionyl-tRNAi to the 40S ribosome. The eIF-3 complex specifically targets and initiates translation of a subset of mRNAs involved in cell proliferation. This subunit can bind 18S rRNA.</text>
</comment>
<comment type="subunit">
    <text evidence="2">Component of the eukaryotic translation initiation factor 3 (eIF-3) complex. The eIF-3 complex interacts with pix.</text>
</comment>
<comment type="subcellular location">
    <subcellularLocation>
        <location evidence="2">Cytoplasm</location>
    </subcellularLocation>
</comment>
<comment type="similarity">
    <text evidence="2">Belongs to the eIF-3 subunit G family.</text>
</comment>
<keyword id="KW-0963">Cytoplasm</keyword>
<keyword id="KW-0396">Initiation factor</keyword>
<keyword id="KW-0648">Protein biosynthesis</keyword>
<keyword id="KW-0694">RNA-binding</keyword>
<accession>B4PP90</accession>
<protein>
    <recommendedName>
        <fullName evidence="1">Eukaryotic translation initiation factor 3 subunit G-2</fullName>
    </recommendedName>
    <alternativeName>
        <fullName evidence="2">Eukaryotic translation initiation factor 3 RNA-binding subunit 2</fullName>
        <shortName evidence="2">eIF-3 RNA-binding subunit-2</shortName>
    </alternativeName>
    <alternativeName>
        <fullName evidence="2">Eukaryotic translation initiation factor 3 subunit 4-2</fullName>
    </alternativeName>
</protein>
<organism>
    <name type="scientific">Drosophila yakuba</name>
    <name type="common">Fruit fly</name>
    <dbReference type="NCBI Taxonomy" id="7245"/>
    <lineage>
        <taxon>Eukaryota</taxon>
        <taxon>Metazoa</taxon>
        <taxon>Ecdysozoa</taxon>
        <taxon>Arthropoda</taxon>
        <taxon>Hexapoda</taxon>
        <taxon>Insecta</taxon>
        <taxon>Pterygota</taxon>
        <taxon>Neoptera</taxon>
        <taxon>Endopterygota</taxon>
        <taxon>Diptera</taxon>
        <taxon>Brachycera</taxon>
        <taxon>Muscomorpha</taxon>
        <taxon>Ephydroidea</taxon>
        <taxon>Drosophilidae</taxon>
        <taxon>Drosophila</taxon>
        <taxon>Sophophora</taxon>
    </lineage>
</organism>
<feature type="chain" id="PRO_0000365430" description="Eukaryotic translation initiation factor 3 subunit G-2">
    <location>
        <begin position="1"/>
        <end position="273"/>
    </location>
</feature>
<feature type="domain" description="RRM" evidence="2">
    <location>
        <begin position="193"/>
        <end position="271"/>
    </location>
</feature>
<feature type="region of interest" description="Disordered" evidence="3">
    <location>
        <begin position="165"/>
        <end position="193"/>
    </location>
</feature>
<feature type="compositionally biased region" description="Gly residues" evidence="3">
    <location>
        <begin position="173"/>
        <end position="183"/>
    </location>
</feature>
<reference key="1">
    <citation type="journal article" date="2007" name="Nature">
        <title>Evolution of genes and genomes on the Drosophila phylogeny.</title>
        <authorList>
            <consortium name="Drosophila 12 genomes consortium"/>
        </authorList>
    </citation>
    <scope>NUCLEOTIDE SEQUENCE [LARGE SCALE GENOMIC DNA]</scope>
    <source>
        <strain>Tai18E2 / Tucson 14021-0261.01</strain>
    </source>
</reference>
<gene>
    <name evidence="1" type="primary">eIF3g2</name>
    <name evidence="2" type="synonym">eIF3-S4</name>
    <name evidence="1" type="synonym">eIF3gb</name>
    <name type="ORF">GE25664</name>
</gene>
<sequence length="273" mass="30495">MKAFNTSWADEVDADYVDGLPPSNEYIEGDYKYVTEYKFNDDGKKVKVVRTFKIEKQIVPKAVARRRSWVKFGDSRLDKPGPNSQTTMASEEIFMQFIGSKEFDQTHETQLDPGKNIAKCRICNGEHWSVNCPYKGTSMDSKTMMETKANAAAAAAISDPSKTGKYVPPFMKDGGGGPGGKNWGRGRERDDSSAVRISNLSESMTEADLEELVKKIGPHTKMYLAREKNTGLCKGFAYVHFKFRQDAAAAIEVLNGHGYDHLILCVEWSKPQP</sequence>
<dbReference type="EMBL" id="CM000160">
    <property type="protein sequence ID" value="EDW96129.1"/>
    <property type="molecule type" value="Genomic_DNA"/>
</dbReference>
<dbReference type="SMR" id="B4PP90"/>
<dbReference type="EnsemblMetazoa" id="FBtr0272182">
    <property type="protein sequence ID" value="FBpp0270674"/>
    <property type="gene ID" value="FBgn0242726"/>
</dbReference>
<dbReference type="EnsemblMetazoa" id="XM_002096381.4">
    <property type="protein sequence ID" value="XP_002096417.1"/>
    <property type="gene ID" value="LOC6535794"/>
</dbReference>
<dbReference type="GeneID" id="6535794"/>
<dbReference type="KEGG" id="dya:Dyak_GE25664"/>
<dbReference type="CTD" id="42422"/>
<dbReference type="eggNOG" id="KOG0122">
    <property type="taxonomic scope" value="Eukaryota"/>
</dbReference>
<dbReference type="HOGENOM" id="CLU_034595_0_0_1"/>
<dbReference type="OMA" id="IVNPYPN"/>
<dbReference type="OrthoDB" id="639027at2759"/>
<dbReference type="PhylomeDB" id="B4PP90"/>
<dbReference type="Proteomes" id="UP000002282">
    <property type="component" value="Chromosome 3R"/>
</dbReference>
<dbReference type="GO" id="GO:0016282">
    <property type="term" value="C:eukaryotic 43S preinitiation complex"/>
    <property type="evidence" value="ECO:0007669"/>
    <property type="project" value="UniProtKB-UniRule"/>
</dbReference>
<dbReference type="GO" id="GO:0033290">
    <property type="term" value="C:eukaryotic 48S preinitiation complex"/>
    <property type="evidence" value="ECO:0007669"/>
    <property type="project" value="UniProtKB-UniRule"/>
</dbReference>
<dbReference type="GO" id="GO:0005852">
    <property type="term" value="C:eukaryotic translation initiation factor 3 complex"/>
    <property type="evidence" value="ECO:0007669"/>
    <property type="project" value="UniProtKB-UniRule"/>
</dbReference>
<dbReference type="GO" id="GO:0003723">
    <property type="term" value="F:RNA binding"/>
    <property type="evidence" value="ECO:0007669"/>
    <property type="project" value="UniProtKB-UniRule"/>
</dbReference>
<dbReference type="GO" id="GO:0003743">
    <property type="term" value="F:translation initiation factor activity"/>
    <property type="evidence" value="ECO:0007669"/>
    <property type="project" value="UniProtKB-UniRule"/>
</dbReference>
<dbReference type="GO" id="GO:0001732">
    <property type="term" value="P:formation of cytoplasmic translation initiation complex"/>
    <property type="evidence" value="ECO:0007669"/>
    <property type="project" value="UniProtKB-UniRule"/>
</dbReference>
<dbReference type="CDD" id="cd12933">
    <property type="entry name" value="eIF3G"/>
    <property type="match status" value="1"/>
</dbReference>
<dbReference type="CDD" id="cd12408">
    <property type="entry name" value="RRM_eIF3G_like"/>
    <property type="match status" value="1"/>
</dbReference>
<dbReference type="FunFam" id="3.30.70.330:FF:000828">
    <property type="entry name" value="Eukaryotic translation initiation factor 3 subunit G"/>
    <property type="match status" value="1"/>
</dbReference>
<dbReference type="Gene3D" id="3.30.70.330">
    <property type="match status" value="1"/>
</dbReference>
<dbReference type="HAMAP" id="MF_03006">
    <property type="entry name" value="eIF3g"/>
    <property type="match status" value="1"/>
</dbReference>
<dbReference type="InterPro" id="IPR017334">
    <property type="entry name" value="eIF3_g"/>
</dbReference>
<dbReference type="InterPro" id="IPR024675">
    <property type="entry name" value="eIF3g_N"/>
</dbReference>
<dbReference type="InterPro" id="IPR034240">
    <property type="entry name" value="eIF3G_RRM"/>
</dbReference>
<dbReference type="InterPro" id="IPR012677">
    <property type="entry name" value="Nucleotide-bd_a/b_plait_sf"/>
</dbReference>
<dbReference type="InterPro" id="IPR035979">
    <property type="entry name" value="RBD_domain_sf"/>
</dbReference>
<dbReference type="InterPro" id="IPR000504">
    <property type="entry name" value="RRM_dom"/>
</dbReference>
<dbReference type="PANTHER" id="PTHR10352">
    <property type="entry name" value="EUKARYOTIC TRANSLATION INITIATION FACTOR 3 SUBUNIT G"/>
    <property type="match status" value="1"/>
</dbReference>
<dbReference type="Pfam" id="PF12353">
    <property type="entry name" value="eIF3g"/>
    <property type="match status" value="1"/>
</dbReference>
<dbReference type="Pfam" id="PF00076">
    <property type="entry name" value="RRM_1"/>
    <property type="match status" value="1"/>
</dbReference>
<dbReference type="PIRSF" id="PIRSF037949">
    <property type="entry name" value="Transl_init_eIF-3_RNA-bind"/>
    <property type="match status" value="1"/>
</dbReference>
<dbReference type="SMART" id="SM00360">
    <property type="entry name" value="RRM"/>
    <property type="match status" value="1"/>
</dbReference>
<dbReference type="SUPFAM" id="SSF54928">
    <property type="entry name" value="RNA-binding domain, RBD"/>
    <property type="match status" value="1"/>
</dbReference>
<dbReference type="PROSITE" id="PS50102">
    <property type="entry name" value="RRM"/>
    <property type="match status" value="1"/>
</dbReference>
<proteinExistence type="inferred from homology"/>